<dbReference type="EMBL" id="CP000323">
    <property type="protein sequence ID" value="ABE75524.1"/>
    <property type="molecule type" value="Genomic_DNA"/>
</dbReference>
<dbReference type="RefSeq" id="WP_010199223.1">
    <property type="nucleotide sequence ID" value="NC_007969.1"/>
</dbReference>
<dbReference type="SMR" id="Q1Q9X9"/>
<dbReference type="STRING" id="335284.Pcryo_1747"/>
<dbReference type="KEGG" id="pcr:Pcryo_1747"/>
<dbReference type="eggNOG" id="COG0102">
    <property type="taxonomic scope" value="Bacteria"/>
</dbReference>
<dbReference type="HOGENOM" id="CLU_082184_2_2_6"/>
<dbReference type="Proteomes" id="UP000002425">
    <property type="component" value="Chromosome"/>
</dbReference>
<dbReference type="GO" id="GO:0022625">
    <property type="term" value="C:cytosolic large ribosomal subunit"/>
    <property type="evidence" value="ECO:0007669"/>
    <property type="project" value="TreeGrafter"/>
</dbReference>
<dbReference type="GO" id="GO:0003729">
    <property type="term" value="F:mRNA binding"/>
    <property type="evidence" value="ECO:0007669"/>
    <property type="project" value="TreeGrafter"/>
</dbReference>
<dbReference type="GO" id="GO:0003735">
    <property type="term" value="F:structural constituent of ribosome"/>
    <property type="evidence" value="ECO:0007669"/>
    <property type="project" value="InterPro"/>
</dbReference>
<dbReference type="GO" id="GO:0017148">
    <property type="term" value="P:negative regulation of translation"/>
    <property type="evidence" value="ECO:0007669"/>
    <property type="project" value="TreeGrafter"/>
</dbReference>
<dbReference type="GO" id="GO:0006412">
    <property type="term" value="P:translation"/>
    <property type="evidence" value="ECO:0007669"/>
    <property type="project" value="UniProtKB-UniRule"/>
</dbReference>
<dbReference type="CDD" id="cd00392">
    <property type="entry name" value="Ribosomal_L13"/>
    <property type="match status" value="1"/>
</dbReference>
<dbReference type="FunFam" id="3.90.1180.10:FF:000001">
    <property type="entry name" value="50S ribosomal protein L13"/>
    <property type="match status" value="1"/>
</dbReference>
<dbReference type="Gene3D" id="3.90.1180.10">
    <property type="entry name" value="Ribosomal protein L13"/>
    <property type="match status" value="1"/>
</dbReference>
<dbReference type="HAMAP" id="MF_01366">
    <property type="entry name" value="Ribosomal_uL13"/>
    <property type="match status" value="1"/>
</dbReference>
<dbReference type="InterPro" id="IPR005822">
    <property type="entry name" value="Ribosomal_uL13"/>
</dbReference>
<dbReference type="InterPro" id="IPR005823">
    <property type="entry name" value="Ribosomal_uL13_bac-type"/>
</dbReference>
<dbReference type="InterPro" id="IPR036899">
    <property type="entry name" value="Ribosomal_uL13_sf"/>
</dbReference>
<dbReference type="NCBIfam" id="TIGR01066">
    <property type="entry name" value="rplM_bact"/>
    <property type="match status" value="1"/>
</dbReference>
<dbReference type="PANTHER" id="PTHR11545:SF2">
    <property type="entry name" value="LARGE RIBOSOMAL SUBUNIT PROTEIN UL13M"/>
    <property type="match status" value="1"/>
</dbReference>
<dbReference type="PANTHER" id="PTHR11545">
    <property type="entry name" value="RIBOSOMAL PROTEIN L13"/>
    <property type="match status" value="1"/>
</dbReference>
<dbReference type="Pfam" id="PF00572">
    <property type="entry name" value="Ribosomal_L13"/>
    <property type="match status" value="1"/>
</dbReference>
<dbReference type="PIRSF" id="PIRSF002181">
    <property type="entry name" value="Ribosomal_L13"/>
    <property type="match status" value="1"/>
</dbReference>
<dbReference type="SUPFAM" id="SSF52161">
    <property type="entry name" value="Ribosomal protein L13"/>
    <property type="match status" value="1"/>
</dbReference>
<name>RL13_PSYCK</name>
<proteinExistence type="inferred from homology"/>
<reference key="1">
    <citation type="submission" date="2006-03" db="EMBL/GenBank/DDBJ databases">
        <title>Complete sequence of chromosome of Psychrobacter cryohalolentis K5.</title>
        <authorList>
            <consortium name="US DOE Joint Genome Institute"/>
            <person name="Copeland A."/>
            <person name="Lucas S."/>
            <person name="Lapidus A."/>
            <person name="Barry K."/>
            <person name="Detter J.C."/>
            <person name="Glavina T."/>
            <person name="Hammon N."/>
            <person name="Israni S."/>
            <person name="Dalin E."/>
            <person name="Tice H."/>
            <person name="Pitluck S."/>
            <person name="Brettin T."/>
            <person name="Bruce D."/>
            <person name="Han C."/>
            <person name="Tapia R."/>
            <person name="Sims D.R."/>
            <person name="Gilna P."/>
            <person name="Schmutz J."/>
            <person name="Larimer F."/>
            <person name="Land M."/>
            <person name="Hauser L."/>
            <person name="Kyrpides N."/>
            <person name="Kim E."/>
            <person name="Richardson P."/>
        </authorList>
    </citation>
    <scope>NUCLEOTIDE SEQUENCE [LARGE SCALE GENOMIC DNA]</scope>
    <source>
        <strain>ATCC BAA-1226 / DSM 17306 / VKM B-2378 / K5</strain>
    </source>
</reference>
<sequence length="142" mass="15711">MKTLSAKPAEVTHDWYVVDADGKTLGRLATQIATRLRGKHKPSFTPHVDTGDFIVVINADKITVTGKKAQDKKYYRHSGYPGGIKETNFSKLLAHKPEDVLHKAVKGMLPKGPLGYAMIKKLKLYAGTEHPHEAQQPKALDI</sequence>
<protein>
    <recommendedName>
        <fullName evidence="1">Large ribosomal subunit protein uL13</fullName>
    </recommendedName>
    <alternativeName>
        <fullName evidence="2">50S ribosomal protein L13</fullName>
    </alternativeName>
</protein>
<keyword id="KW-0687">Ribonucleoprotein</keyword>
<keyword id="KW-0689">Ribosomal protein</keyword>
<comment type="function">
    <text evidence="1">This protein is one of the early assembly proteins of the 50S ribosomal subunit, although it is not seen to bind rRNA by itself. It is important during the early stages of 50S assembly.</text>
</comment>
<comment type="subunit">
    <text evidence="1">Part of the 50S ribosomal subunit.</text>
</comment>
<comment type="similarity">
    <text evidence="1">Belongs to the universal ribosomal protein uL13 family.</text>
</comment>
<organism>
    <name type="scientific">Psychrobacter cryohalolentis (strain ATCC BAA-1226 / DSM 17306 / VKM B-2378 / K5)</name>
    <dbReference type="NCBI Taxonomy" id="335284"/>
    <lineage>
        <taxon>Bacteria</taxon>
        <taxon>Pseudomonadati</taxon>
        <taxon>Pseudomonadota</taxon>
        <taxon>Gammaproteobacteria</taxon>
        <taxon>Moraxellales</taxon>
        <taxon>Moraxellaceae</taxon>
        <taxon>Psychrobacter</taxon>
    </lineage>
</organism>
<evidence type="ECO:0000255" key="1">
    <source>
        <dbReference type="HAMAP-Rule" id="MF_01366"/>
    </source>
</evidence>
<evidence type="ECO:0000305" key="2"/>
<accession>Q1Q9X9</accession>
<feature type="chain" id="PRO_0000261777" description="Large ribosomal subunit protein uL13">
    <location>
        <begin position="1"/>
        <end position="142"/>
    </location>
</feature>
<gene>
    <name evidence="1" type="primary">rplM</name>
    <name type="ordered locus">Pcryo_1747</name>
</gene>